<feature type="chain" id="PRO_0000462499" description="Polymerase acidic protein">
    <location>
        <begin position="1"/>
        <end position="716"/>
    </location>
</feature>
<feature type="short sequence motif" description="Nuclear localization signal 1 (NLS1)" evidence="1">
    <location>
        <begin position="124"/>
        <end position="139"/>
    </location>
</feature>
<feature type="short sequence motif" description="Nuclear localization signal 2 (NLS2)" evidence="2">
    <location>
        <begin position="184"/>
        <end position="247"/>
    </location>
</feature>
<feature type="active site" evidence="15 16">
    <location>
        <position position="134"/>
    </location>
</feature>
<feature type="binding site" evidence="2 4 5 6 7 8 9 10 11 12 13 14 17 18 20 21 22 23 24 25 26 27 28 29 30 31 32 33 34 35 36 37 38 39 40 41 42 43 44 45 46 47 48 49 50 52 53 54 55 56 57 58 59 60 61 62 63 64 65 66 67 68 69 70 71 72 73 74 75 76 77 78 79 80 81 82 83 84 85 86 87 88 89 90 91 92 93 94 95 96 97 98 99 100 101 102 103 104 105 106 107 108 109">
    <location>
        <position position="41"/>
    </location>
    <ligand>
        <name>Mn(2+)</name>
        <dbReference type="ChEBI" id="CHEBI:29035"/>
        <label>1</label>
        <note>catalytic</note>
    </ligand>
</feature>
<feature type="binding site" evidence="2 5 6 7 26 46 73 74">
    <location>
        <position position="80"/>
    </location>
    <ligand>
        <name>Mn(2+)</name>
        <dbReference type="ChEBI" id="CHEBI:29035"/>
        <label>1</label>
        <note>catalytic</note>
    </ligand>
</feature>
<feature type="binding site" evidence="2 4 5 6 7 8 9 10 11 12 13 14 17 18 19 20 21 22 23 24 25 27 29 30 31 32 33 35 36 37 39 40 41 42 43 44 45 47 48 49 50 51 52 53 54 55 56 57 58 59 60 61 62 63 64 65 66 67 68 69 70 71 72 75 76 77 78 79 80 81 82 83 84 85 86 87 88 89 90 91 92 93 94 95 96 97 98 99 100 101 102 103 104 105 106 107 108 109">
    <location>
        <position position="80"/>
    </location>
    <ligand>
        <name>Mn(2+)</name>
        <dbReference type="ChEBI" id="CHEBI:29035"/>
        <label>2</label>
        <note>catalytic</note>
    </ligand>
</feature>
<feature type="binding site" evidence="2 4 5 6 7 8 9 10 11 12 13 14 17 18 19 20 21 22 23 24 25 26 27 28 29 30 31 32 33 34 35 36 37 38 39 40 41 42 43 44 45 46 47 48 49 50 51 52 53 54 55 56 57 58 59 60 61 62 63 64 65 66 67 68 69 70 71 72 73 74 75 76 77 78 79 80 81 82 83 84 85 86 87 88 89 90 91 92 93 94 95 96 97 98 99 100 101 102 103 104 105 106 107 108 109">
    <location>
        <position position="108"/>
    </location>
    <ligand>
        <name>Mn(2+)</name>
        <dbReference type="ChEBI" id="CHEBI:29035"/>
        <label>1</label>
        <note>catalytic</note>
    </ligand>
</feature>
<feature type="binding site" evidence="2 4 6 7 8 9 10 11 12 13 14 17 18 19 20 21 22 23 24 25 27 29 30 31 32 33 35 36 37 39 40 41 42 43 44 45 47 48 49 50 51 52 53 54 55 56 57 58 59 60 61 62 63 64 65 66 67 68 69 70 71 72 75 76 77 78 79 80 81 82 83 84 85 86 87 88 89 90 91 92 93 94 95 96 97 98 99 100 101 102 103 104 105 106 107 108 109">
    <location>
        <position position="108"/>
    </location>
    <ligand>
        <name>Mn(2+)</name>
        <dbReference type="ChEBI" id="CHEBI:29035"/>
        <label>2</label>
        <note>catalytic</note>
    </ligand>
</feature>
<feature type="binding site" evidence="2 4 5 6 7 8 9 10 11 12 13 14 17 18 19 20 21 22 23 24 25 26 27 29 30 31 33 36 37 38 39 40 42 43 44 45 46 47 48 49 50 51 52 53 54 55 56 57 58 59 60 61 68 69 70 71 72 73 74 75 76 77 78 79 80 81 82 83 84 85 86 87 88 89 90 91 92 93 94 95 96 97 98 99 100 101 102 103 104 105 106 107 108 109">
    <location>
        <position position="119"/>
    </location>
    <ligand>
        <name>Mn(2+)</name>
        <dbReference type="ChEBI" id="CHEBI:29035"/>
        <label>1</label>
        <note>catalytic</note>
    </ligand>
</feature>
<feature type="binding site" evidence="2 4 5 6 7 8 9 10 11 12 13 14 17 18 19 20 21 22 23 24 25 26 27 28 29 30 31 32 33 34 35 36 37 38 39 40 41 42 43 44 45 46 47 48 49 50 51 52 53 54 55 56 57 58 59 60 61 62 63 64 65 66 67 68 69 70 71 72 73 74 75 76 77 78 79 80 81 82 83 84 85 86 87 88 89 90 91 92 93 94 95 96 97 98 99 100 101 102 103 104 105 106 107 108 109">
    <location>
        <position position="120"/>
    </location>
    <ligand>
        <name>Mn(2+)</name>
        <dbReference type="ChEBI" id="CHEBI:29035"/>
        <label>1</label>
        <note>catalytic</note>
    </ligand>
</feature>
<feature type="sequence variant" description="Reduced affinity for Baloxavir and Baloxavir marboxil." evidence="14">
    <original>E</original>
    <variation>K</variation>
    <location>
        <position position="23"/>
    </location>
</feature>
<feature type="sequence variant" description="Reduced affinity for Baloxavir and Baloxavir marboxil." evidence="14">
    <original>A</original>
    <variation>V</variation>
    <location>
        <position position="36"/>
    </location>
</feature>
<feature type="sequence variant" description="RO-7 resistant, reduced affinity for Baloxavir and Baloxavir marboxil." evidence="8 9 14">
    <original>I</original>
    <variation>T</variation>
    <location>
        <position position="38"/>
    </location>
</feature>
<feature type="mutagenesis site" description="Less affected by the inhibitor L-742,001 than WT." evidence="5">
    <original>I</original>
    <variation>L</variation>
    <location>
        <position position="79"/>
    </location>
</feature>
<feature type="mutagenesis site" description="Less affected by the inhibitor L-742,001 than WT." evidence="5">
    <original>F</original>
    <variation>S</variation>
    <location>
        <position position="105"/>
    </location>
</feature>
<feature type="mutagenesis site" description="Not affected by the inhibitor L-742,001 at all." evidence="5">
    <original>E</original>
    <variation>D</variation>
    <location>
        <position position="119"/>
    </location>
</feature>
<proteinExistence type="evidence at protein level"/>
<keyword id="KW-0002">3D-structure</keyword>
<keyword id="KW-1157">Cap snatching</keyword>
<keyword id="KW-0255">Endonuclease</keyword>
<keyword id="KW-1262">Eukaryotic host gene expression shutoff by virus</keyword>
<keyword id="KW-1191">Eukaryotic host transcription shutoff by virus</keyword>
<keyword id="KW-1035">Host cytoplasm</keyword>
<keyword id="KW-1190">Host gene expression shutoff by virus</keyword>
<keyword id="KW-1048">Host nucleus</keyword>
<keyword id="KW-0945">Host-virus interaction</keyword>
<keyword id="KW-0378">Hydrolase</keyword>
<keyword id="KW-1104">Inhibition of host RNA polymerase II by virus</keyword>
<keyword id="KW-0464">Manganese</keyword>
<keyword id="KW-0479">Metal-binding</keyword>
<keyword id="KW-0540">Nuclease</keyword>
<keyword id="KW-0597">Phosphoprotein</keyword>
<keyword id="KW-0688">Ribosomal frameshifting</keyword>
<name>PA_I09A0</name>
<sequence>MEDFVRQCFNPMIVELAEKAMKEYGEDPKIETNKFAAICTHLEVCFMYSDFHFIDERGESIIVESGDPNALLKHRFEIIEGRDRIMAWTVVNSICNTTGVEKPKFLPDLYDYKENRFIEIGVTRREVHIYYLEKANKIKSEKTHIHIFSFTGEEMATKADYTLDEESRARIKTRLFTIRQEMASRSLWDSFRQSERGEETIEEKFEITGTMRKLADQSLPPNFPSLENFRAYVDGFEPNGCIEGKLSQMSKEVNAKIEPFLRTTPRPLRLPDGPLCHQRSKFLLMDALKLSIEDPSHEGEGIPLYDAIKCMKTFFGWKEPNIVKPHEKGINPNYLMAWKQVLAELQDIENEEKIPRTKNMKRTSQLKWALGENMAPEKVDFDDCKDVGDLKQYDSDEPEPRSLASWVQNEFNKACELTDSSWIELDEIGEDVAPIEHIASMRRNYFTAEVSHCRATEYIMKGVYINTALLNASCAAMDDFQLIPMISKCRTKEGRRKTNLYGFIIKGRSHLRNDTDVVNFVSMEFSLTDPRLEPHKWEKYCVLEIGDMLLRTAIGQVSRPMFLYVRTNGTSKIKMKWGMEMRRCLLQSLQQIESMIEAESSVKEKDMTKEFFENKSETWPIGESPRGVEEGSIGKVCRTLLAKSVFNSLYASPQLEGFSAESRKLLLIVQALRDNLEPGTFDLGGLYEAIEECLINDPWVLLNASWFNSFLTHALK</sequence>
<organismHost>
    <name type="scientific">Aves</name>
    <dbReference type="NCBI Taxonomy" id="8782"/>
</organismHost>
<organismHost>
    <name type="scientific">Homo sapiens</name>
    <name type="common">Human</name>
    <dbReference type="NCBI Taxonomy" id="9606"/>
</organismHost>
<organismHost>
    <name type="scientific">Sus scrofa</name>
    <name type="common">Pig</name>
    <dbReference type="NCBI Taxonomy" id="9823"/>
</organismHost>
<evidence type="ECO:0000250" key="1">
    <source>
        <dbReference type="UniProtKB" id="P03433"/>
    </source>
</evidence>
<evidence type="ECO:0000255" key="2">
    <source>
        <dbReference type="HAMAP-Rule" id="MF_04063"/>
    </source>
</evidence>
<evidence type="ECO:0000255" key="3">
    <source>
        <dbReference type="RuleBase" id="RU361280"/>
    </source>
</evidence>
<evidence type="ECO:0000269" key="4">
    <source>
    </source>
</evidence>
<evidence type="ECO:0000269" key="5">
    <source>
    </source>
</evidence>
<evidence type="ECO:0000269" key="6">
    <source>
    </source>
</evidence>
<evidence type="ECO:0000269" key="7">
    <source>
    </source>
</evidence>
<evidence type="ECO:0000269" key="8">
    <source>
    </source>
</evidence>
<evidence type="ECO:0000269" key="9">
    <source>
    </source>
</evidence>
<evidence type="ECO:0000269" key="10">
    <source>
    </source>
</evidence>
<evidence type="ECO:0000269" key="11">
    <source>
    </source>
</evidence>
<evidence type="ECO:0000269" key="12">
    <source>
    </source>
</evidence>
<evidence type="ECO:0000269" key="13">
    <source>
    </source>
</evidence>
<evidence type="ECO:0000269" key="14">
    <source>
    </source>
</evidence>
<evidence type="ECO:0000305" key="15">
    <source>
    </source>
</evidence>
<evidence type="ECO:0000305" key="16">
    <source>
    </source>
</evidence>
<evidence type="ECO:0007744" key="17">
    <source>
        <dbReference type="PDB" id="4AVG"/>
    </source>
</evidence>
<evidence type="ECO:0007744" key="18">
    <source>
        <dbReference type="PDB" id="4AVL"/>
    </source>
</evidence>
<evidence type="ECO:0007744" key="19">
    <source>
        <dbReference type="PDB" id="4AVQ"/>
    </source>
</evidence>
<evidence type="ECO:0007744" key="20">
    <source>
        <dbReference type="PDB" id="4AWF"/>
    </source>
</evidence>
<evidence type="ECO:0007744" key="21">
    <source>
        <dbReference type="PDB" id="4AWG"/>
    </source>
</evidence>
<evidence type="ECO:0007744" key="22">
    <source>
        <dbReference type="PDB" id="4AWH"/>
    </source>
</evidence>
<evidence type="ECO:0007744" key="23">
    <source>
        <dbReference type="PDB" id="4AWK"/>
    </source>
</evidence>
<evidence type="ECO:0007744" key="24">
    <source>
        <dbReference type="PDB" id="4AWM"/>
    </source>
</evidence>
<evidence type="ECO:0007744" key="25">
    <source>
        <dbReference type="PDB" id="5CCY"/>
    </source>
</evidence>
<evidence type="ECO:0007744" key="26">
    <source>
        <dbReference type="PDB" id="5CGV"/>
    </source>
</evidence>
<evidence type="ECO:0007744" key="27">
    <source>
        <dbReference type="PDB" id="5CL0"/>
    </source>
</evidence>
<evidence type="ECO:0007744" key="28">
    <source>
        <dbReference type="PDB" id="5CZN"/>
    </source>
</evidence>
<evidence type="ECO:0007744" key="29">
    <source>
        <dbReference type="PDB" id="5D2O"/>
    </source>
</evidence>
<evidence type="ECO:0007744" key="30">
    <source>
        <dbReference type="PDB" id="5D42"/>
    </source>
</evidence>
<evidence type="ECO:0007744" key="31">
    <source>
        <dbReference type="PDB" id="5D4G"/>
    </source>
</evidence>
<evidence type="ECO:0007744" key="32">
    <source>
        <dbReference type="PDB" id="5D8U"/>
    </source>
</evidence>
<evidence type="ECO:0007744" key="33">
    <source>
        <dbReference type="PDB" id="5D9J"/>
    </source>
</evidence>
<evidence type="ECO:0007744" key="34">
    <source>
        <dbReference type="PDB" id="5DBS"/>
    </source>
</evidence>
<evidence type="ECO:0007744" key="35">
    <source>
        <dbReference type="PDB" id="5DEB"/>
    </source>
</evidence>
<evidence type="ECO:0007744" key="36">
    <source>
        <dbReference type="PDB" id="5DES"/>
    </source>
</evidence>
<evidence type="ECO:0007744" key="37">
    <source>
        <dbReference type="PDB" id="5EGA"/>
    </source>
</evidence>
<evidence type="ECO:0007744" key="38">
    <source>
        <dbReference type="PDB" id="5VP8"/>
    </source>
</evidence>
<evidence type="ECO:0007744" key="39">
    <source>
        <dbReference type="PDB" id="5VPT"/>
    </source>
</evidence>
<evidence type="ECO:0007744" key="40">
    <source>
        <dbReference type="PDB" id="5VPX"/>
    </source>
</evidence>
<evidence type="ECO:0007744" key="41">
    <source>
        <dbReference type="PDB" id="5VQN"/>
    </source>
</evidence>
<evidence type="ECO:0007744" key="42">
    <source>
        <dbReference type="PDB" id="5VRJ"/>
    </source>
</evidence>
<evidence type="ECO:0007744" key="43">
    <source>
        <dbReference type="PDB" id="5W3I"/>
    </source>
</evidence>
<evidence type="ECO:0007744" key="44">
    <source>
        <dbReference type="PDB" id="5W44"/>
    </source>
</evidence>
<evidence type="ECO:0007744" key="45">
    <source>
        <dbReference type="PDB" id="5W73"/>
    </source>
</evidence>
<evidence type="ECO:0007744" key="46">
    <source>
        <dbReference type="PDB" id="5W7U"/>
    </source>
</evidence>
<evidence type="ECO:0007744" key="47">
    <source>
        <dbReference type="PDB" id="5W92"/>
    </source>
</evidence>
<evidence type="ECO:0007744" key="48">
    <source>
        <dbReference type="PDB" id="5W9G"/>
    </source>
</evidence>
<evidence type="ECO:0007744" key="49">
    <source>
        <dbReference type="PDB" id="5WA6"/>
    </source>
</evidence>
<evidence type="ECO:0007744" key="50">
    <source>
        <dbReference type="PDB" id="5WA7"/>
    </source>
</evidence>
<evidence type="ECO:0007744" key="51">
    <source>
        <dbReference type="PDB" id="5WAP"/>
    </source>
</evidence>
<evidence type="ECO:0007744" key="52">
    <source>
        <dbReference type="PDB" id="5WB3"/>
    </source>
</evidence>
<evidence type="ECO:0007744" key="53">
    <source>
        <dbReference type="PDB" id="5WCS"/>
    </source>
</evidence>
<evidence type="ECO:0007744" key="54">
    <source>
        <dbReference type="PDB" id="5WCT"/>
    </source>
</evidence>
<evidence type="ECO:0007744" key="55">
    <source>
        <dbReference type="PDB" id="5WDC"/>
    </source>
</evidence>
<evidence type="ECO:0007744" key="56">
    <source>
        <dbReference type="PDB" id="5WDN"/>
    </source>
</evidence>
<evidence type="ECO:0007744" key="57">
    <source>
        <dbReference type="PDB" id="5WDW"/>
    </source>
</evidence>
<evidence type="ECO:0007744" key="58">
    <source>
        <dbReference type="PDB" id="5WE7"/>
    </source>
</evidence>
<evidence type="ECO:0007744" key="59">
    <source>
        <dbReference type="PDB" id="5WE9"/>
    </source>
</evidence>
<evidence type="ECO:0007744" key="60">
    <source>
        <dbReference type="PDB" id="5WEB"/>
    </source>
</evidence>
<evidence type="ECO:0007744" key="61">
    <source>
        <dbReference type="PDB" id="5WEF"/>
    </source>
</evidence>
<evidence type="ECO:0007744" key="62">
    <source>
        <dbReference type="PDB" id="5WEI"/>
    </source>
</evidence>
<evidence type="ECO:0007744" key="63">
    <source>
        <dbReference type="PDB" id="5WF3"/>
    </source>
</evidence>
<evidence type="ECO:0007744" key="64">
    <source>
        <dbReference type="PDB" id="5WFM"/>
    </source>
</evidence>
<evidence type="ECO:0007744" key="65">
    <source>
        <dbReference type="PDB" id="5WFW"/>
    </source>
</evidence>
<evidence type="ECO:0007744" key="66">
    <source>
        <dbReference type="PDB" id="5WFZ"/>
    </source>
</evidence>
<evidence type="ECO:0007744" key="67">
    <source>
        <dbReference type="PDB" id="5WG9"/>
    </source>
</evidence>
<evidence type="ECO:0007744" key="68">
    <source>
        <dbReference type="PDB" id="6DCY"/>
    </source>
</evidence>
<evidence type="ECO:0007744" key="69">
    <source>
        <dbReference type="PDB" id="6DCZ"/>
    </source>
</evidence>
<evidence type="ECO:0007744" key="70">
    <source>
        <dbReference type="PDB" id="6DZQ"/>
    </source>
</evidence>
<evidence type="ECO:0007744" key="71">
    <source>
        <dbReference type="PDB" id="6E0Q"/>
    </source>
</evidence>
<evidence type="ECO:0007744" key="72">
    <source>
        <dbReference type="PDB" id="6E3M"/>
    </source>
</evidence>
<evidence type="ECO:0007744" key="73">
    <source>
        <dbReference type="PDB" id="6E3N"/>
    </source>
</evidence>
<evidence type="ECO:0007744" key="74">
    <source>
        <dbReference type="PDB" id="6E3O"/>
    </source>
</evidence>
<evidence type="ECO:0007744" key="75">
    <source>
        <dbReference type="PDB" id="6E3P"/>
    </source>
</evidence>
<evidence type="ECO:0007744" key="76">
    <source>
        <dbReference type="PDB" id="6E4C"/>
    </source>
</evidence>
<evidence type="ECO:0007744" key="77">
    <source>
        <dbReference type="PDB" id="6E6V"/>
    </source>
</evidence>
<evidence type="ECO:0007744" key="78">
    <source>
        <dbReference type="PDB" id="6E6W"/>
    </source>
</evidence>
<evidence type="ECO:0007744" key="79">
    <source>
        <dbReference type="PDB" id="6E6X"/>
    </source>
</evidence>
<evidence type="ECO:0007744" key="80">
    <source>
        <dbReference type="PDB" id="6FS6"/>
    </source>
</evidence>
<evidence type="ECO:0007744" key="81">
    <source>
        <dbReference type="PDB" id="6FS7"/>
    </source>
</evidence>
<evidence type="ECO:0007744" key="82">
    <source>
        <dbReference type="PDB" id="7K0W"/>
    </source>
</evidence>
<evidence type="ECO:0007744" key="83">
    <source>
        <dbReference type="PDB" id="7LM4"/>
    </source>
</evidence>
<evidence type="ECO:0007744" key="84">
    <source>
        <dbReference type="PDB" id="7ML8"/>
    </source>
</evidence>
<evidence type="ECO:0007744" key="85">
    <source>
        <dbReference type="PDB" id="7MPF"/>
    </source>
</evidence>
<evidence type="ECO:0007744" key="86">
    <source>
        <dbReference type="PDB" id="7MTY"/>
    </source>
</evidence>
<evidence type="ECO:0007744" key="87">
    <source>
        <dbReference type="PDB" id="7MX0"/>
    </source>
</evidence>
<evidence type="ECO:0007744" key="88">
    <source>
        <dbReference type="PDB" id="7MY5"/>
    </source>
</evidence>
<evidence type="ECO:0007744" key="89">
    <source>
        <dbReference type="PDB" id="7N47"/>
    </source>
</evidence>
<evidence type="ECO:0007744" key="90">
    <source>
        <dbReference type="PDB" id="7N55"/>
    </source>
</evidence>
<evidence type="ECO:0007744" key="91">
    <source>
        <dbReference type="PDB" id="7N68"/>
    </source>
</evidence>
<evidence type="ECO:0007744" key="92">
    <source>
        <dbReference type="PDB" id="7N8F"/>
    </source>
</evidence>
<evidence type="ECO:0007744" key="93">
    <source>
        <dbReference type="PDB" id="7RKP"/>
    </source>
</evidence>
<evidence type="ECO:0007744" key="94">
    <source>
        <dbReference type="PDB" id="7V04"/>
    </source>
</evidence>
<evidence type="ECO:0007744" key="95">
    <source>
        <dbReference type="PDB" id="8CTF"/>
    </source>
</evidence>
<evidence type="ECO:0007744" key="96">
    <source>
        <dbReference type="PDB" id="8DAL"/>
    </source>
</evidence>
<evidence type="ECO:0007744" key="97">
    <source>
        <dbReference type="PDB" id="8DDB"/>
    </source>
</evidence>
<evidence type="ECO:0007744" key="98">
    <source>
        <dbReference type="PDB" id="8DDE"/>
    </source>
</evidence>
<evidence type="ECO:0007744" key="99">
    <source>
        <dbReference type="PDB" id="8DHN"/>
    </source>
</evidence>
<evidence type="ECO:0007744" key="100">
    <source>
        <dbReference type="PDB" id="8DJV"/>
    </source>
</evidence>
<evidence type="ECO:0007744" key="101">
    <source>
        <dbReference type="PDB" id="8DJY"/>
    </source>
</evidence>
<evidence type="ECO:0007744" key="102">
    <source>
        <dbReference type="PDB" id="8T5V"/>
    </source>
</evidence>
<evidence type="ECO:0007744" key="103">
    <source>
        <dbReference type="PDB" id="8T5W"/>
    </source>
</evidence>
<evidence type="ECO:0007744" key="104">
    <source>
        <dbReference type="PDB" id="8T5Z"/>
    </source>
</evidence>
<evidence type="ECO:0007744" key="105">
    <source>
        <dbReference type="PDB" id="8T67"/>
    </source>
</evidence>
<evidence type="ECO:0007744" key="106">
    <source>
        <dbReference type="PDB" id="8T6Z"/>
    </source>
</evidence>
<evidence type="ECO:0007744" key="107">
    <source>
        <dbReference type="PDB" id="8T81"/>
    </source>
</evidence>
<evidence type="ECO:0007744" key="108">
    <source>
        <dbReference type="PDB" id="8T94"/>
    </source>
</evidence>
<evidence type="ECO:0007744" key="109">
    <source>
        <dbReference type="PDB" id="8VGZ"/>
    </source>
</evidence>
<dbReference type="EC" id="3.1.-.-" evidence="2"/>
<dbReference type="EMBL" id="FJ966081">
    <property type="protein sequence ID" value="ACP41104.1"/>
    <property type="molecule type" value="Viral_cRNA"/>
</dbReference>
<dbReference type="EMBL" id="FJ969515">
    <property type="protein sequence ID" value="ACP44156.1"/>
    <property type="molecule type" value="Viral_cRNA"/>
</dbReference>
<dbReference type="EMBL" id="JF915188">
    <property type="protein sequence ID" value="AEE69014.1"/>
    <property type="molecule type" value="Viral_cRNA"/>
</dbReference>
<dbReference type="PDB" id="4AVG">
    <property type="method" value="X-ray"/>
    <property type="resolution" value="2.20 A"/>
    <property type="chains" value="A/B/C/D=1-198"/>
</dbReference>
<dbReference type="PDB" id="4AVL">
    <property type="method" value="X-ray"/>
    <property type="resolution" value="1.87 A"/>
    <property type="chains" value="A/B/C/D=1-198"/>
</dbReference>
<dbReference type="PDB" id="4AVQ">
    <property type="method" value="X-ray"/>
    <property type="resolution" value="2.10 A"/>
    <property type="chains" value="A/B/C/D=1-198"/>
</dbReference>
<dbReference type="PDB" id="4AWF">
    <property type="method" value="X-ray"/>
    <property type="resolution" value="2.30 A"/>
    <property type="chains" value="A/B/C/D=1-198"/>
</dbReference>
<dbReference type="PDB" id="4AWG">
    <property type="method" value="X-ray"/>
    <property type="resolution" value="2.60 A"/>
    <property type="chains" value="A/B/C/D=1-198"/>
</dbReference>
<dbReference type="PDB" id="4AWH">
    <property type="method" value="X-ray"/>
    <property type="resolution" value="2.05 A"/>
    <property type="chains" value="A/B/C/D=1-198"/>
</dbReference>
<dbReference type="PDB" id="4AWK">
    <property type="method" value="X-ray"/>
    <property type="resolution" value="1.90 A"/>
    <property type="chains" value="A=1-198"/>
</dbReference>
<dbReference type="PDB" id="4AWM">
    <property type="method" value="X-ray"/>
    <property type="resolution" value="2.60 A"/>
    <property type="chains" value="A=1-198"/>
</dbReference>
<dbReference type="PDB" id="5CCY">
    <property type="method" value="X-ray"/>
    <property type="resolution" value="2.10 A"/>
    <property type="chains" value="A=1-50, A=73-196"/>
</dbReference>
<dbReference type="PDB" id="5CGV">
    <property type="method" value="X-ray"/>
    <property type="resolution" value="2.17 A"/>
    <property type="chains" value="A=1-50, A=73-196"/>
</dbReference>
<dbReference type="PDB" id="5CL0">
    <property type="method" value="X-ray"/>
    <property type="resolution" value="2.22 A"/>
    <property type="chains" value="A=1-50, A=73-196"/>
</dbReference>
<dbReference type="PDB" id="5CZN">
    <property type="method" value="X-ray"/>
    <property type="resolution" value="1.98 A"/>
    <property type="chains" value="A=1-50, A=73-196"/>
</dbReference>
<dbReference type="PDB" id="5D2O">
    <property type="method" value="X-ray"/>
    <property type="resolution" value="2.15 A"/>
    <property type="chains" value="A=1-50, A=73-196"/>
</dbReference>
<dbReference type="PDB" id="5D42">
    <property type="method" value="X-ray"/>
    <property type="resolution" value="2.00 A"/>
    <property type="chains" value="A=1-50, A=73-196"/>
</dbReference>
<dbReference type="PDB" id="5D4G">
    <property type="method" value="X-ray"/>
    <property type="resolution" value="2.08 A"/>
    <property type="chains" value="A=1-50, A=73-196"/>
</dbReference>
<dbReference type="PDB" id="5D8U">
    <property type="method" value="X-ray"/>
    <property type="resolution" value="2.29 A"/>
    <property type="chains" value="A=1-50, A=73-196"/>
</dbReference>
<dbReference type="PDB" id="5D9J">
    <property type="method" value="X-ray"/>
    <property type="resolution" value="1.85 A"/>
    <property type="chains" value="A=1-50, A=73-196"/>
</dbReference>
<dbReference type="PDB" id="5DBS">
    <property type="method" value="X-ray"/>
    <property type="resolution" value="2.11 A"/>
    <property type="chains" value="A=1-50, A=73-196"/>
</dbReference>
<dbReference type="PDB" id="5DEB">
    <property type="method" value="X-ray"/>
    <property type="resolution" value="2.14 A"/>
    <property type="chains" value="A=1-50, A=73-196"/>
</dbReference>
<dbReference type="PDB" id="5DES">
    <property type="method" value="X-ray"/>
    <property type="resolution" value="2.05 A"/>
    <property type="chains" value="A=1-50, A=73-196"/>
</dbReference>
<dbReference type="PDB" id="5EGA">
    <property type="method" value="X-ray"/>
    <property type="resolution" value="2.15 A"/>
    <property type="chains" value="A=1-50, A=73-196"/>
</dbReference>
<dbReference type="PDB" id="5VP8">
    <property type="method" value="X-ray"/>
    <property type="resolution" value="2.20 A"/>
    <property type="chains" value="A=1-50, A=73-196"/>
</dbReference>
<dbReference type="PDB" id="5VPT">
    <property type="method" value="X-ray"/>
    <property type="resolution" value="2.10 A"/>
    <property type="chains" value="A=1-50, A=73-196"/>
</dbReference>
<dbReference type="PDB" id="5VPX">
    <property type="method" value="X-ray"/>
    <property type="resolution" value="2.30 A"/>
    <property type="chains" value="A=1-50, A=73-196"/>
</dbReference>
<dbReference type="PDB" id="5VQN">
    <property type="method" value="X-ray"/>
    <property type="resolution" value="2.00 A"/>
    <property type="chains" value="A=1-50, A=73-196"/>
</dbReference>
<dbReference type="PDB" id="5VRJ">
    <property type="method" value="X-ray"/>
    <property type="resolution" value="2.30 A"/>
    <property type="chains" value="A=1-50, A=73-196"/>
</dbReference>
<dbReference type="PDB" id="5W3I">
    <property type="method" value="X-ray"/>
    <property type="resolution" value="1.95 A"/>
    <property type="chains" value="A=1-50, A=73-196"/>
</dbReference>
<dbReference type="PDB" id="5W44">
    <property type="method" value="X-ray"/>
    <property type="resolution" value="2.10 A"/>
    <property type="chains" value="A=1-50, A=73-196"/>
</dbReference>
<dbReference type="PDB" id="5W73">
    <property type="method" value="X-ray"/>
    <property type="resolution" value="2.20 A"/>
    <property type="chains" value="A=1-50, A=73-196"/>
</dbReference>
<dbReference type="PDB" id="5W7U">
    <property type="method" value="X-ray"/>
    <property type="resolution" value="2.20 A"/>
    <property type="chains" value="A=1-50, A=73-196"/>
</dbReference>
<dbReference type="PDB" id="5W92">
    <property type="method" value="X-ray"/>
    <property type="resolution" value="2.30 A"/>
    <property type="chains" value="A=1-50, A=73-196"/>
</dbReference>
<dbReference type="PDB" id="5W9G">
    <property type="method" value="X-ray"/>
    <property type="resolution" value="2.10 A"/>
    <property type="chains" value="A=1-50, A=73-196"/>
</dbReference>
<dbReference type="PDB" id="5WA6">
    <property type="method" value="X-ray"/>
    <property type="resolution" value="2.25 A"/>
    <property type="chains" value="A=1-50, A=73-196"/>
</dbReference>
<dbReference type="PDB" id="5WA7">
    <property type="method" value="X-ray"/>
    <property type="resolution" value="2.20 A"/>
    <property type="chains" value="A=1-50, A=73-196"/>
</dbReference>
<dbReference type="PDB" id="5WAP">
    <property type="method" value="X-ray"/>
    <property type="resolution" value="2.20 A"/>
    <property type="chains" value="A=1-50, A=73-196"/>
</dbReference>
<dbReference type="PDB" id="5WB3">
    <property type="method" value="X-ray"/>
    <property type="resolution" value="2.20 A"/>
    <property type="chains" value="A=1-50, A=73-196"/>
</dbReference>
<dbReference type="PDB" id="5WCS">
    <property type="method" value="X-ray"/>
    <property type="resolution" value="2.52 A"/>
    <property type="chains" value="A=1-50, A=73-196"/>
</dbReference>
<dbReference type="PDB" id="5WCT">
    <property type="method" value="X-ray"/>
    <property type="resolution" value="2.30 A"/>
    <property type="chains" value="A=1-50, A=73-196"/>
</dbReference>
<dbReference type="PDB" id="5WDC">
    <property type="method" value="X-ray"/>
    <property type="resolution" value="2.10 A"/>
    <property type="chains" value="A=1-50, A=73-196"/>
</dbReference>
<dbReference type="PDB" id="5WDN">
    <property type="method" value="X-ray"/>
    <property type="resolution" value="2.10 A"/>
    <property type="chains" value="A=1-50, A=73-196"/>
</dbReference>
<dbReference type="PDB" id="5WDW">
    <property type="method" value="X-ray"/>
    <property type="resolution" value="2.30 A"/>
    <property type="chains" value="A=1-50, A=73-196"/>
</dbReference>
<dbReference type="PDB" id="5WE7">
    <property type="method" value="X-ray"/>
    <property type="resolution" value="2.12 A"/>
    <property type="chains" value="A=1-50, A=73-196"/>
</dbReference>
<dbReference type="PDB" id="5WE9">
    <property type="method" value="X-ray"/>
    <property type="resolution" value="1.80 A"/>
    <property type="chains" value="A=1-50, A=73-196"/>
</dbReference>
<dbReference type="PDB" id="5WEB">
    <property type="method" value="X-ray"/>
    <property type="resolution" value="2.25 A"/>
    <property type="chains" value="A=1-50, A=73-196"/>
</dbReference>
<dbReference type="PDB" id="5WEF">
    <property type="method" value="X-ray"/>
    <property type="resolution" value="2.00 A"/>
    <property type="chains" value="A=1-50, A=73-196"/>
</dbReference>
<dbReference type="PDB" id="5WEI">
    <property type="method" value="X-ray"/>
    <property type="resolution" value="2.25 A"/>
    <property type="chains" value="A=1-50, A=73-196"/>
</dbReference>
<dbReference type="PDB" id="5WF3">
    <property type="method" value="X-ray"/>
    <property type="resolution" value="2.25 A"/>
    <property type="chains" value="A=1-50, A=73-196"/>
</dbReference>
<dbReference type="PDB" id="5WFM">
    <property type="method" value="X-ray"/>
    <property type="resolution" value="2.25 A"/>
    <property type="chains" value="A=1-50, A=73-196"/>
</dbReference>
<dbReference type="PDB" id="5WFW">
    <property type="method" value="X-ray"/>
    <property type="resolution" value="2.29 A"/>
    <property type="chains" value="A=1-50, A=73-196"/>
</dbReference>
<dbReference type="PDB" id="5WFZ">
    <property type="method" value="X-ray"/>
    <property type="resolution" value="2.35 A"/>
    <property type="chains" value="A=1-50, A=73-196"/>
</dbReference>
<dbReference type="PDB" id="5WG9">
    <property type="method" value="X-ray"/>
    <property type="resolution" value="2.30 A"/>
    <property type="chains" value="A=1-50, A=73-196"/>
</dbReference>
<dbReference type="PDB" id="6DCY">
    <property type="method" value="X-ray"/>
    <property type="resolution" value="2.08 A"/>
    <property type="chains" value="A=1-198"/>
</dbReference>
<dbReference type="PDB" id="6DCZ">
    <property type="method" value="X-ray"/>
    <property type="resolution" value="2.89 A"/>
    <property type="chains" value="A=1-198"/>
</dbReference>
<dbReference type="PDB" id="6DZQ">
    <property type="method" value="X-ray"/>
    <property type="resolution" value="2.25 A"/>
    <property type="chains" value="A=1-198"/>
</dbReference>
<dbReference type="PDB" id="6E0Q">
    <property type="method" value="X-ray"/>
    <property type="resolution" value="2.35 A"/>
    <property type="chains" value="A=1-198"/>
</dbReference>
<dbReference type="PDB" id="6E3M">
    <property type="method" value="X-ray"/>
    <property type="resolution" value="2.65 A"/>
    <property type="chains" value="A=1-198"/>
</dbReference>
<dbReference type="PDB" id="6E3N">
    <property type="method" value="X-ray"/>
    <property type="resolution" value="3.19 A"/>
    <property type="chains" value="A=1-198"/>
</dbReference>
<dbReference type="PDB" id="6E3O">
    <property type="method" value="X-ray"/>
    <property type="resolution" value="3.19 A"/>
    <property type="chains" value="A=1-198"/>
</dbReference>
<dbReference type="PDB" id="6E3P">
    <property type="method" value="X-ray"/>
    <property type="resolution" value="2.80 A"/>
    <property type="chains" value="A=1-198"/>
</dbReference>
<dbReference type="PDB" id="6E4C">
    <property type="method" value="X-ray"/>
    <property type="resolution" value="2.35 A"/>
    <property type="chains" value="A=1-198"/>
</dbReference>
<dbReference type="PDB" id="6E6V">
    <property type="method" value="X-ray"/>
    <property type="resolution" value="2.25 A"/>
    <property type="chains" value="A=1-198"/>
</dbReference>
<dbReference type="PDB" id="6E6W">
    <property type="method" value="X-ray"/>
    <property type="resolution" value="2.35 A"/>
    <property type="chains" value="A=1-198"/>
</dbReference>
<dbReference type="PDB" id="6E6X">
    <property type="method" value="X-ray"/>
    <property type="resolution" value="2.50 A"/>
    <property type="chains" value="A=1-198"/>
</dbReference>
<dbReference type="PDB" id="6FS6">
    <property type="method" value="X-ray"/>
    <property type="resolution" value="2.29 A"/>
    <property type="chains" value="A/B/C/D/E/F=1-51, A/B/C/D/E/F=65-198"/>
</dbReference>
<dbReference type="PDB" id="6FS7">
    <property type="method" value="X-ray"/>
    <property type="resolution" value="1.96 A"/>
    <property type="chains" value="A/B/C/D/E/F=1-51, A/B/C/D/E/F=65-198"/>
</dbReference>
<dbReference type="PDB" id="7K0W">
    <property type="method" value="X-ray"/>
    <property type="resolution" value="2.09 A"/>
    <property type="chains" value="A=1-50, A=73-196"/>
</dbReference>
<dbReference type="PDB" id="7LM4">
    <property type="method" value="X-ray"/>
    <property type="resolution" value="2.35 A"/>
    <property type="chains" value="A=1-196"/>
</dbReference>
<dbReference type="PDB" id="7ML8">
    <property type="method" value="X-ray"/>
    <property type="resolution" value="2.70 A"/>
    <property type="chains" value="A=1-50, A=73-196"/>
</dbReference>
<dbReference type="PDB" id="7MPF">
    <property type="method" value="X-ray"/>
    <property type="resolution" value="2.80 A"/>
    <property type="chains" value="A=1-50, A=73-196"/>
</dbReference>
<dbReference type="PDB" id="7MTY">
    <property type="method" value="X-ray"/>
    <property type="resolution" value="2.38 A"/>
    <property type="chains" value="A=1-50, A=73-196"/>
</dbReference>
<dbReference type="PDB" id="7MX0">
    <property type="method" value="X-ray"/>
    <property type="resolution" value="2.48 A"/>
    <property type="chains" value="A=1-50, A=73-196"/>
</dbReference>
<dbReference type="PDB" id="7MY5">
    <property type="method" value="X-ray"/>
    <property type="resolution" value="2.38 A"/>
    <property type="chains" value="A=1-50, A=73-196"/>
</dbReference>
<dbReference type="PDB" id="7N47">
    <property type="method" value="X-ray"/>
    <property type="resolution" value="2.37 A"/>
    <property type="chains" value="A=1-50, A=73-196"/>
</dbReference>
<dbReference type="PDB" id="7N55">
    <property type="method" value="X-ray"/>
    <property type="resolution" value="2.33 A"/>
    <property type="chains" value="A=1-50, A=73-196"/>
</dbReference>
<dbReference type="PDB" id="7N68">
    <property type="method" value="X-ray"/>
    <property type="resolution" value="2.26 A"/>
    <property type="chains" value="A=1-50, A=73-196"/>
</dbReference>
<dbReference type="PDB" id="7N8F">
    <property type="method" value="X-ray"/>
    <property type="resolution" value="2.35 A"/>
    <property type="chains" value="A=1-50, A=73-196"/>
</dbReference>
<dbReference type="PDB" id="7RKP">
    <property type="method" value="X-ray"/>
    <property type="resolution" value="2.36 A"/>
    <property type="chains" value="A=1-50, A=73-196"/>
</dbReference>
<dbReference type="PDB" id="7V04">
    <property type="method" value="X-ray"/>
    <property type="resolution" value="1.91 A"/>
    <property type="chains" value="A=1-198"/>
</dbReference>
<dbReference type="PDB" id="8CTF">
    <property type="method" value="X-ray"/>
    <property type="resolution" value="2.14 A"/>
    <property type="chains" value="A=1-198"/>
</dbReference>
<dbReference type="PDB" id="8DAL">
    <property type="method" value="X-ray"/>
    <property type="resolution" value="2.20 A"/>
    <property type="chains" value="A=1-198"/>
</dbReference>
<dbReference type="PDB" id="8DDB">
    <property type="method" value="X-ray"/>
    <property type="resolution" value="2.15 A"/>
    <property type="chains" value="A=1-183"/>
</dbReference>
<dbReference type="PDB" id="8DDE">
    <property type="method" value="X-ray"/>
    <property type="resolution" value="2.22 A"/>
    <property type="chains" value="A=1-198"/>
</dbReference>
<dbReference type="PDB" id="8DHN">
    <property type="method" value="X-ray"/>
    <property type="resolution" value="2.40 A"/>
    <property type="chains" value="A=1-198"/>
</dbReference>
<dbReference type="PDB" id="8DJV">
    <property type="method" value="X-ray"/>
    <property type="resolution" value="2.08 A"/>
    <property type="chains" value="A=1-198"/>
</dbReference>
<dbReference type="PDB" id="8DJY">
    <property type="method" value="X-ray"/>
    <property type="resolution" value="2.50 A"/>
    <property type="chains" value="A=1-198"/>
</dbReference>
<dbReference type="PDB" id="8T5V">
    <property type="method" value="X-ray"/>
    <property type="resolution" value="1.79 A"/>
    <property type="chains" value="A=1-198"/>
</dbReference>
<dbReference type="PDB" id="8T5W">
    <property type="method" value="X-ray"/>
    <property type="resolution" value="1.65 A"/>
    <property type="chains" value="A=1-198"/>
</dbReference>
<dbReference type="PDB" id="8T5Z">
    <property type="method" value="X-ray"/>
    <property type="resolution" value="2.03 A"/>
    <property type="chains" value="A=1-198"/>
</dbReference>
<dbReference type="PDB" id="8T67">
    <property type="method" value="X-ray"/>
    <property type="resolution" value="2.08 A"/>
    <property type="chains" value="A=1-198"/>
</dbReference>
<dbReference type="PDB" id="8T6Z">
    <property type="method" value="X-ray"/>
    <property type="resolution" value="1.91 A"/>
    <property type="chains" value="A=1-198"/>
</dbReference>
<dbReference type="PDB" id="8T81">
    <property type="method" value="X-ray"/>
    <property type="resolution" value="2.60 A"/>
    <property type="chains" value="A=1-198"/>
</dbReference>
<dbReference type="PDB" id="8T94">
    <property type="method" value="X-ray"/>
    <property type="resolution" value="2.11 A"/>
    <property type="chains" value="A=1-198"/>
</dbReference>
<dbReference type="PDB" id="8VGZ">
    <property type="method" value="X-ray"/>
    <property type="resolution" value="2.09 A"/>
    <property type="chains" value="A=1-191"/>
</dbReference>
<dbReference type="PDBsum" id="4AVG"/>
<dbReference type="PDBsum" id="4AVL"/>
<dbReference type="PDBsum" id="4AVQ"/>
<dbReference type="PDBsum" id="4AWF"/>
<dbReference type="PDBsum" id="4AWG"/>
<dbReference type="PDBsum" id="4AWH"/>
<dbReference type="PDBsum" id="4AWK"/>
<dbReference type="PDBsum" id="4AWM"/>
<dbReference type="PDBsum" id="5CCY"/>
<dbReference type="PDBsum" id="5CGV"/>
<dbReference type="PDBsum" id="5CL0"/>
<dbReference type="PDBsum" id="5CZN"/>
<dbReference type="PDBsum" id="5D2O"/>
<dbReference type="PDBsum" id="5D42"/>
<dbReference type="PDBsum" id="5D4G"/>
<dbReference type="PDBsum" id="5D8U"/>
<dbReference type="PDBsum" id="5D9J"/>
<dbReference type="PDBsum" id="5DBS"/>
<dbReference type="PDBsum" id="5DEB"/>
<dbReference type="PDBsum" id="5DES"/>
<dbReference type="PDBsum" id="5EGA"/>
<dbReference type="PDBsum" id="5VP8"/>
<dbReference type="PDBsum" id="5VPT"/>
<dbReference type="PDBsum" id="5VPX"/>
<dbReference type="PDBsum" id="5VQN"/>
<dbReference type="PDBsum" id="5VRJ"/>
<dbReference type="PDBsum" id="5W3I"/>
<dbReference type="PDBsum" id="5W44"/>
<dbReference type="PDBsum" id="5W73"/>
<dbReference type="PDBsum" id="5W7U"/>
<dbReference type="PDBsum" id="5W92"/>
<dbReference type="PDBsum" id="5W9G"/>
<dbReference type="PDBsum" id="5WA6"/>
<dbReference type="PDBsum" id="5WA7"/>
<dbReference type="PDBsum" id="5WAP"/>
<dbReference type="PDBsum" id="5WB3"/>
<dbReference type="PDBsum" id="5WCS"/>
<dbReference type="PDBsum" id="5WCT"/>
<dbReference type="PDBsum" id="5WDC"/>
<dbReference type="PDBsum" id="5WDN"/>
<dbReference type="PDBsum" id="5WDW"/>
<dbReference type="PDBsum" id="5WE7"/>
<dbReference type="PDBsum" id="5WE9"/>
<dbReference type="PDBsum" id="5WEB"/>
<dbReference type="PDBsum" id="5WEF"/>
<dbReference type="PDBsum" id="5WEI"/>
<dbReference type="PDBsum" id="5WF3"/>
<dbReference type="PDBsum" id="5WFM"/>
<dbReference type="PDBsum" id="5WFW"/>
<dbReference type="PDBsum" id="5WFZ"/>
<dbReference type="PDBsum" id="5WG9"/>
<dbReference type="PDBsum" id="6DCY"/>
<dbReference type="PDBsum" id="6DCZ"/>
<dbReference type="PDBsum" id="6DZQ"/>
<dbReference type="PDBsum" id="6E0Q"/>
<dbReference type="PDBsum" id="6E3M"/>
<dbReference type="PDBsum" id="6E3N"/>
<dbReference type="PDBsum" id="6E3O"/>
<dbReference type="PDBsum" id="6E3P"/>
<dbReference type="PDBsum" id="6E4C"/>
<dbReference type="PDBsum" id="6E6V"/>
<dbReference type="PDBsum" id="6E6W"/>
<dbReference type="PDBsum" id="6E6X"/>
<dbReference type="PDBsum" id="6FS6"/>
<dbReference type="PDBsum" id="6FS7"/>
<dbReference type="PDBsum" id="7K0W"/>
<dbReference type="PDBsum" id="7LM4"/>
<dbReference type="PDBsum" id="7ML8"/>
<dbReference type="PDBsum" id="7MPF"/>
<dbReference type="PDBsum" id="7MTY"/>
<dbReference type="PDBsum" id="7MX0"/>
<dbReference type="PDBsum" id="7MY5"/>
<dbReference type="PDBsum" id="7N47"/>
<dbReference type="PDBsum" id="7N55"/>
<dbReference type="PDBsum" id="7N68"/>
<dbReference type="PDBsum" id="7N8F"/>
<dbReference type="PDBsum" id="7RKP"/>
<dbReference type="PDBsum" id="7V04"/>
<dbReference type="PDBsum" id="8CTF"/>
<dbReference type="PDBsum" id="8DAL"/>
<dbReference type="PDBsum" id="8DDB"/>
<dbReference type="PDBsum" id="8DDE"/>
<dbReference type="PDBsum" id="8DHN"/>
<dbReference type="PDBsum" id="8DJV"/>
<dbReference type="PDBsum" id="8DJY"/>
<dbReference type="PDBsum" id="8T5V"/>
<dbReference type="PDBsum" id="8T5W"/>
<dbReference type="PDBsum" id="8T5Z"/>
<dbReference type="PDBsum" id="8T67"/>
<dbReference type="PDBsum" id="8T6Z"/>
<dbReference type="PDBsum" id="8T81"/>
<dbReference type="PDBsum" id="8T94"/>
<dbReference type="PDBsum" id="8VGZ"/>
<dbReference type="SMR" id="C3W5S0"/>
<dbReference type="IntAct" id="C3W5S0">
    <property type="interactions" value="4"/>
</dbReference>
<dbReference type="MINT" id="C3W5S0"/>
<dbReference type="Proteomes" id="UP000132424">
    <property type="component" value="Genome"/>
</dbReference>
<dbReference type="GO" id="GO:0030430">
    <property type="term" value="C:host cell cytoplasm"/>
    <property type="evidence" value="ECO:0007669"/>
    <property type="project" value="UniProtKB-SubCell"/>
</dbReference>
<dbReference type="GO" id="GO:0042025">
    <property type="term" value="C:host cell nucleus"/>
    <property type="evidence" value="ECO:0007669"/>
    <property type="project" value="UniProtKB-SubCell"/>
</dbReference>
<dbReference type="GO" id="GO:0004519">
    <property type="term" value="F:endonuclease activity"/>
    <property type="evidence" value="ECO:0007669"/>
    <property type="project" value="UniProtKB-KW"/>
</dbReference>
<dbReference type="GO" id="GO:0046872">
    <property type="term" value="F:metal ion binding"/>
    <property type="evidence" value="ECO:0007669"/>
    <property type="project" value="UniProtKB-KW"/>
</dbReference>
<dbReference type="GO" id="GO:0003723">
    <property type="term" value="F:RNA binding"/>
    <property type="evidence" value="ECO:0007669"/>
    <property type="project" value="UniProtKB-UniRule"/>
</dbReference>
<dbReference type="GO" id="GO:0075526">
    <property type="term" value="P:cap snatching"/>
    <property type="evidence" value="ECO:0007669"/>
    <property type="project" value="UniProtKB-UniRule"/>
</dbReference>
<dbReference type="GO" id="GO:0006351">
    <property type="term" value="P:DNA-templated transcription"/>
    <property type="evidence" value="ECO:0007669"/>
    <property type="project" value="UniProtKB-UniRule"/>
</dbReference>
<dbReference type="GO" id="GO:0039657">
    <property type="term" value="P:symbiont-mediated suppression of host gene expression"/>
    <property type="evidence" value="ECO:0007669"/>
    <property type="project" value="UniProtKB-KW"/>
</dbReference>
<dbReference type="GO" id="GO:0039523">
    <property type="term" value="P:symbiont-mediated suppression of host mRNA transcription via inhibition of RNA polymerase II activity"/>
    <property type="evidence" value="ECO:0007669"/>
    <property type="project" value="UniProtKB-UniRule"/>
</dbReference>
<dbReference type="GO" id="GO:0039694">
    <property type="term" value="P:viral RNA genome replication"/>
    <property type="evidence" value="ECO:0007669"/>
    <property type="project" value="InterPro"/>
</dbReference>
<dbReference type="GO" id="GO:0075523">
    <property type="term" value="P:viral translational frameshifting"/>
    <property type="evidence" value="ECO:0007669"/>
    <property type="project" value="UniProtKB-KW"/>
</dbReference>
<dbReference type="FunFam" id="3.40.91.90:FF:000001">
    <property type="entry name" value="Polymerase acidic protein"/>
    <property type="match status" value="1"/>
</dbReference>
<dbReference type="Gene3D" id="3.40.91.90">
    <property type="entry name" value="Influenza RNA-dependent RNA polymerase subunit PA, endonuclease domain"/>
    <property type="match status" value="1"/>
</dbReference>
<dbReference type="HAMAP" id="MF_04063">
    <property type="entry name" value="INFV_PA"/>
    <property type="match status" value="1"/>
</dbReference>
<dbReference type="InterPro" id="IPR037534">
    <property type="entry name" value="INFV_PA"/>
</dbReference>
<dbReference type="InterPro" id="IPR001009">
    <property type="entry name" value="PA/PA-X"/>
</dbReference>
<dbReference type="InterPro" id="IPR038372">
    <property type="entry name" value="PA/PA-X_sf"/>
</dbReference>
<dbReference type="Pfam" id="PF00603">
    <property type="entry name" value="Flu_PA"/>
    <property type="match status" value="1"/>
</dbReference>
<gene>
    <name evidence="2" type="primary">PA</name>
</gene>
<reference key="1">
    <citation type="journal article" date="2009" name="Science">
        <title>Antigenic and genetic characteristics of swine-origin 2009 A(H1N1) influenza viruses circulating in humans.</title>
        <authorList>
            <person name="Garten R.J."/>
            <person name="Davis C.T."/>
            <person name="Russell C.A."/>
            <person name="Shu B."/>
            <person name="Lindstrom S."/>
            <person name="Balish A."/>
            <person name="Sessions W.M."/>
            <person name="Xu X."/>
            <person name="Skepner E."/>
            <person name="Deyde V."/>
            <person name="Okomo-Adhiambo M."/>
            <person name="Gubareva L."/>
            <person name="Barnes J."/>
            <person name="Smith C.B."/>
            <person name="Emery S.L."/>
            <person name="Hillman M.J."/>
            <person name="Rivailler P."/>
            <person name="Smagala J."/>
            <person name="de Graaf M."/>
            <person name="Burke D.F."/>
            <person name="Fouchier R.A."/>
            <person name="Pappas C."/>
            <person name="Alpuche-Aranda C.M."/>
            <person name="Lopez-Gatell H."/>
            <person name="Olivera H."/>
            <person name="Lopez I."/>
            <person name="Myers C.A."/>
            <person name="Faix D."/>
            <person name="Blair P.J."/>
            <person name="Yu C."/>
            <person name="Keene K.M."/>
            <person name="Dotson P.D."/>
            <person name="Boxrud D."/>
            <person name="Sambol A.R."/>
            <person name="Abid S.H."/>
            <person name="St George K."/>
            <person name="Bannerman T."/>
            <person name="Moore A.L."/>
            <person name="Stringer D.J."/>
            <person name="Blevins P."/>
            <person name="Demmler-Harrison G.J."/>
            <person name="Ginsberg M."/>
            <person name="Kriner P."/>
            <person name="Waterman S."/>
            <person name="Smole S."/>
            <person name="Guevara H.F."/>
            <person name="Belongia E.A."/>
            <person name="Clark P.A."/>
            <person name="Beatrice S.T."/>
            <person name="Donis R."/>
            <person name="Katz J."/>
            <person name="Finelli L."/>
            <person name="Bridges C.B."/>
            <person name="Shaw M."/>
            <person name="Jernigan D.B."/>
            <person name="Uyeki T.M."/>
            <person name="Smith D.J."/>
            <person name="Klimov A.I."/>
            <person name="Cox N.J."/>
        </authorList>
    </citation>
    <scope>NUCLEOTIDE SEQUENCE [GENOMIC DNA]</scope>
    <source>
        <strain>A/California/04/2009</strain>
    </source>
</reference>
<reference key="2">
    <citation type="journal article" date="2011" name="J. Virol.">
        <title>2009 Pandemic H1N1 Influenza Virus Causes Disease and Upregulation of Genes Related to Inflammatory and Immune Responses, Cell Death, and Lipid Metabolism in Pigs.</title>
        <authorList>
            <person name="Ma W."/>
            <person name="Belisle S.E."/>
            <person name="Mosier D."/>
            <person name="Li X."/>
            <person name="Stigger-Rosser E."/>
            <person name="Liu Q."/>
            <person name="Qiao C."/>
            <person name="Elder J."/>
            <person name="Webby R."/>
            <person name="Katze M.G."/>
            <person name="Richt J.A."/>
        </authorList>
    </citation>
    <scope>NUCLEOTIDE SEQUENCE [GENOMIC DNA]</scope>
    <source>
        <strain>A/California/04/2009</strain>
    </source>
</reference>
<reference evidence="17 18 19 20 22 23 24" key="3">
    <citation type="journal article" date="2012" name="PLoS Pathog.">
        <title>Structural analysis of specific metal chelating inhibitor binding to the endonuclease domain of influenza pH1N1 (2009) polymerase.</title>
        <authorList>
            <person name="Kowalinski E."/>
            <person name="Zubieta C."/>
            <person name="Wolkerstorfer A."/>
            <person name="Szolar O.H."/>
            <person name="Ruigrok R.W."/>
            <person name="Cusack S."/>
        </authorList>
    </citation>
    <scope>X-RAY CRYSTALLOGRAPHY (1.87 ANGSTROMS) OF 1-198 IN COMPLEX WITH MANGANESE AND INHIBITORS</scope>
    <scope>CATALYTIC ACTIVITY</scope>
    <scope>ACTIVITY REGULATION</scope>
    <scope>ACTIVE SITE</scope>
    <scope>COFACTOR</scope>
    <source>
        <strain>A/California/04/2009</strain>
        <strain>A/Victoria/3/ 1975</strain>
    </source>
</reference>
<reference evidence="25 26" key="4">
    <citation type="journal article" date="2016" name="Proc. Natl. Acad. Sci. U.S.A.">
        <title>Identification and characterization of influenza variants resistant to a viral endonuclease inhibitor.</title>
        <authorList>
            <person name="Song M.S."/>
            <person name="Kumar G."/>
            <person name="Shadrick W.R."/>
            <person name="Zhou W."/>
            <person name="Jeevan T."/>
            <person name="Li Z."/>
            <person name="Slavish P.J."/>
            <person name="Fabrizio T.P."/>
            <person name="Yoon S.W."/>
            <person name="Webb T.R."/>
            <person name="Webby R.J."/>
            <person name="White S.W."/>
        </authorList>
    </citation>
    <scope>X-RAY CRYSTALLOGRAPHY (1.85 ANGSTROMS) OF 1-50 AND 73-196 IN COMPLEX WITH MANGANESE AND INHIBITOR</scope>
    <scope>CATALYTIC ACTIVITY</scope>
    <scope>ACTIVITY REGULATION</scope>
    <scope>MUTAGENESIS OF ILE-79; PHE-105 AND GLU-119</scope>
    <scope>COFACTOR</scope>
    <scope>BIOPHYSICOCHEMICAL PROPERTIES</scope>
</reference>
<reference evidence="37" key="5">
    <citation type="journal article" date="2016" name="Sci. Rep.">
        <title>N-acylhydrazone inhibitors of influenza virus PA endonuclease with versatile metal binding modes.</title>
        <authorList>
            <person name="Carcelli M."/>
            <person name="Rogolino D."/>
            <person name="Gatti A."/>
            <person name="De Luca L."/>
            <person name="Sechi M."/>
            <person name="Kumar G."/>
            <person name="White S.W."/>
            <person name="Stevaert A."/>
            <person name="Naesens L."/>
        </authorList>
    </citation>
    <scope>X-RAY CRYSTALLOGRAPHY (2.15 ANGSTROMS) OF 1-50 AND 73-196 IN COMPLEX WITH MN(2+) AND INHIBITORS</scope>
    <scope>COFACTOR</scope>
    <scope>ACTIVITY REGULATION</scope>
    <scope>CATALYTIC ACTIVITY</scope>
</reference>
<reference evidence="43 44" key="6">
    <citation type="journal article" date="2017" name="Sci. Rep.">
        <title>Protein-Structure Assisted Optimization of 4,5-Dihydroxypyrimidine-6-Carboxamide Inhibitors of Influenza Virus Endonuclease.</title>
        <authorList>
            <person name="Beylkin D."/>
            <person name="Kumar G."/>
            <person name="Zhou W."/>
            <person name="Park J."/>
            <person name="Jeevan T."/>
            <person name="Lagisetti C."/>
            <person name="Harfoot R."/>
            <person name="Webby R.J."/>
            <person name="White S.W."/>
            <person name="Webb T.R."/>
        </authorList>
    </citation>
    <scope>X-RAY CRYSTALLOGRAPHY (1.80 ANGSTROMS) OF 1-50 AND 73-196 IN COMPLEX WITH MG(2+) AND MN(2+)</scope>
    <scope>CATALYTIC ACTIVITY</scope>
    <scope>COFACTOR</scope>
    <scope>ACTIVITY REGULATION</scope>
</reference>
<reference evidence="68 69" key="7">
    <citation type="journal article" date="2018" name="J. Med. Chem.">
        <title>Structure-Activity Relationships in Metal-Binding Pharmacophores for Influenza Endonuclease.</title>
        <authorList>
            <person name="Credille C.V."/>
            <person name="Dick B.L."/>
            <person name="Morrison C.N."/>
            <person name="Stokes R.W."/>
            <person name="Adamek R.N."/>
            <person name="Wu N.C."/>
            <person name="Wilson I.A."/>
            <person name="Cohen S.M."/>
        </authorList>
    </citation>
    <scope>X-RAY CRYSTALLOGRAPHY (2.08 ANGSTROMS) OF 1-198 IN COMPLEX WITH MN(2+)</scope>
</reference>
<reference evidence="38 39" key="8">
    <citation type="journal article" date="2018" name="MBio">
        <title>Identification of the I38T PA Substitution as a Resistance Marker for Next-Generation Influenza Virus Endonuclease Inhibitors.</title>
        <authorList>
            <person name="Jones J.C."/>
            <person name="Kumar G."/>
            <person name="Barman S."/>
            <person name="Najera I."/>
            <person name="White S.W."/>
            <person name="Webby R.J."/>
            <person name="Govorkova E.A."/>
        </authorList>
    </citation>
    <scope>X-RAY CRYSTALLOGRAPHY (2.00 ANGSTROMS) OF 1-50 AND 73-196 IN COMPLEX WITH MG(2+) AND MN(2+)</scope>
    <scope>ACTIVITY REGULATION</scope>
    <scope>VARIANT THR-38</scope>
    <scope>CATALYTIC ACTIVITY</scope>
    <scope>COFACTOR</scope>
</reference>
<reference evidence="80 81" key="9">
    <citation type="journal article" date="2018" name="Sci. Rep.">
        <title>Characterization of influenza virus variants induced by treatment with the endonuclease inhibitor baloxavir marboxil.</title>
        <authorList>
            <person name="Omoto S."/>
            <person name="Speranzini V."/>
            <person name="Hashimoto T."/>
            <person name="Noshi T."/>
            <person name="Yamaguchi H."/>
            <person name="Kawai M."/>
            <person name="Kawaguchi K."/>
            <person name="Uehara T."/>
            <person name="Shishido T."/>
            <person name="Naito A."/>
            <person name="Cusack S."/>
        </authorList>
    </citation>
    <scope>X-RAY CRYSTALLOGRAPHY (1.96 ANGSTROMS) OF 1-51 AND 65-198 IN COMPLEX WITH MN(2+) AND INHIBITORS</scope>
    <scope>VARIANT THR-38</scope>
    <scope>CATALYTIC ACTIVITY</scope>
    <scope>ACTIVITY REGULATION</scope>
    <scope>COFACTOR</scope>
</reference>
<reference evidence="72 73" key="10">
    <citation type="journal article" date="2019" name="J. Med. Chem.">
        <title>SAR Exploration of Tight-Binding Inhibitors of Influenza Virus PA Endonuclease.</title>
        <authorList>
            <person name="Credille C.V."/>
            <person name="Morrison C.N."/>
            <person name="Stokes R.W."/>
            <person name="Dick B.L."/>
            <person name="Feng Y."/>
            <person name="Sun J."/>
            <person name="Chen Y."/>
            <person name="Cohen S.M."/>
        </authorList>
    </citation>
    <scope>X-RAY CRYSTALLOGRAPHY (2.25 ANGSTROMS) OF 1-198 IN COMPLEX WITH MN(2+) AND INHIBITORS</scope>
    <scope>CATALYTIC ACTIVITY</scope>
    <scope>ACTIVITY REGULATION</scope>
    <scope>COFACTOR</scope>
</reference>
<reference evidence="94 95" key="11">
    <citation type="journal article" date="2023" name="ACS Med. Chem. Lett.">
        <title>Carboxylic Acid Isostere Derivatives of Hydroxypyridinones as Core Scaffolds for Influenza Endonuclease Inhibitors.</title>
        <authorList>
            <person name="Stokes R.W."/>
            <person name="Kohlbrand A.J."/>
            <person name="Seo H."/>
            <person name="Sankaran B."/>
            <person name="Karges J."/>
            <person name="Cohen S.M."/>
        </authorList>
    </citation>
    <scope>X-RAY CRYSTALLOGRAPHY (1.91 ANGSTROMS) OF 1-198 IN COMPLEX WITH MN(2+) AND INHIBITORS</scope>
    <scope>COFACTOR</scope>
</reference>
<reference evidence="83 85" key="12">
    <citation type="journal article" date="2023" name="Eur. J. Med. Chem.">
        <title>Chemical scaffold recycling: Structure-guided conversion of an HIV integrase inhibitor into a potent influenza virus RNA-dependent RNA polymerase inhibitor designed to minimize resistance potential.</title>
        <authorList>
            <person name="Slavish P.J."/>
            <person name="Cuypers M.G."/>
            <person name="Rimmer M.A."/>
            <person name="Abdolvahabi A."/>
            <person name="Jeevan T."/>
            <person name="Kumar G."/>
            <person name="Jarusiewicz J.A."/>
            <person name="Vaithiyalingam S."/>
            <person name="Jones J.C."/>
            <person name="Bowling J.J."/>
            <person name="Price J.E."/>
            <person name="DuBois R.M."/>
            <person name="Min J."/>
            <person name="Webby R.J."/>
            <person name="Rankovic Z."/>
            <person name="White S.W."/>
        </authorList>
    </citation>
    <scope>X-RAY CRYSTALLOGRAPHY (2.33 ANGSTROMS) OF 1-50 AND 73-196 IN COMPLEX WITH MN(2+) AND RALTEGRAVIR DERIVATIVES</scope>
</reference>
<reference evidence="102 103" key="13">
    <citation type="journal article" date="2024" name="Biochemistry">
        <title>Structural Studies of Inhibitors with Clinically Relevant Influenza Endonuclease Variants.</title>
        <authorList>
            <person name="Kohlbrand A.J."/>
            <person name="Stokes R.W."/>
            <person name="Sankaran B."/>
            <person name="Cohen S.M."/>
        </authorList>
    </citation>
    <scope>X-RAY CRYSTALLOGRAPHY (1.91 ANGSTROMS) OF 1-198 IN COMPLEX WITH MN(2+) AND BALOXAVIR</scope>
    <scope>VARIANTS LYS-23; VAL-36 AND THR-38</scope>
</reference>
<comment type="function">
    <text evidence="2">Plays an essential role in viral RNA transcription and replication by forming the heterotrimeric polymerase complex together with PB1 and PB2 subunits. The complex transcribes viral mRNAs by using a unique mechanism called cap-snatching. It consists in the hijacking and cleavage of host capped pre-mRNAs. These short capped RNAs are then used as primers for viral mRNAs. The PB2 subunit is responsible for the binding of the 5' cap of cellular pre-mRNAs which are subsequently cleaved after 10-13 nucleotides by the PA subunit that carries the endonuclease activity.</text>
</comment>
<comment type="cofactor">
    <cofactor evidence="2 4 5 6 7">
        <name>Mn(2+)</name>
        <dbReference type="ChEBI" id="CHEBI:29035"/>
    </cofactor>
    <text evidence="2 4 5 6 7 8 9 11 13">Binds 2 manganese ions per subunit.</text>
</comment>
<comment type="activity regulation">
    <text evidence="4 5 6 7 8 9 11 12">Endonuclease activity is inhibited by 2,4-dioxo-4-phenylbutanoic acid (DPBA), RO5-1, RO5-2, RO5-3 and EGCG (PubMed:22876177). Also inhibited by L-742,001 (PubMed:26976575, PubMed:31536340). Inhibited by some N-acylhydrazones (PubMed:27510745). Inhibited by 5,6 dimethoxy-2-indanyl (PubMed:29215062). Inhibited by RO-7 (PubMed:29691337). Inhibited by Baloxavir acid (BXA) (PubMed:29941893, PubMed:31536340). Inhibited by Raltegravir derivatives (PubMed:36603507).</text>
</comment>
<comment type="biophysicochemical properties">
    <kinetics>
        <KM evidence="5">1566 nM for a 20nt substrate</KM>
    </kinetics>
</comment>
<comment type="subunit">
    <text evidence="2">Influenza RNA polymerase is composed of three subunits: PB1, PB2 and PA. Interacts (via C-terminus) with PB1 (via N-terminus).</text>
</comment>
<comment type="subcellular location">
    <subcellularLocation>
        <location evidence="2">Host cytoplasm</location>
    </subcellularLocation>
    <subcellularLocation>
        <location evidence="2">Host nucleus</location>
    </subcellularLocation>
    <text evidence="2">PB1 and PA are transported in the host nucleus as a complex.</text>
</comment>
<comment type="alternative products">
    <event type="ribosomal frameshifting"/>
    <isoform>
        <id>C3W5S0-1</id>
        <name>PA</name>
        <sequence type="displayed"/>
    </isoform>
    <isoform>
        <id>P0DXO5-1</id>
        <name>PA-X</name>
        <sequence type="external"/>
    </isoform>
</comment>
<comment type="PTM">
    <text evidence="2">Phosphorylated on serines and threonines by host kinases, including human casein kinase II.</text>
</comment>
<comment type="similarity">
    <text evidence="2 3">Belongs to the influenza viruses PA family.</text>
</comment>
<accession>C3W5S0</accession>
<organism>
    <name type="scientific">Influenza A virus (strain swl A/California/04/2009 H1N1)</name>
    <dbReference type="NCBI Taxonomy" id="641501"/>
    <lineage>
        <taxon>Viruses</taxon>
        <taxon>Riboviria</taxon>
        <taxon>Orthornavirae</taxon>
        <taxon>Negarnaviricota</taxon>
        <taxon>Polyploviricotina</taxon>
        <taxon>Insthoviricetes</taxon>
        <taxon>Articulavirales</taxon>
        <taxon>Orthomyxoviridae</taxon>
        <taxon>Alphainfluenzavirus</taxon>
        <taxon>Alphainfluenzavirus influenzae</taxon>
        <taxon>Influenza A virus</taxon>
    </lineage>
</organism>
<protein>
    <recommendedName>
        <fullName evidence="2">Polymerase acidic protein</fullName>
        <ecNumber evidence="2">3.1.-.-</ecNumber>
    </recommendedName>
    <alternativeName>
        <fullName evidence="2">RNA-directed RNA polymerase subunit P2</fullName>
    </alternativeName>
</protein>